<gene>
    <name evidence="1" type="primary">bioF</name>
</gene>
<feature type="chain" id="PRO_0000163812" description="8-amino-7-oxononanoate synthase">
    <location>
        <begin position="1"/>
        <end position="385"/>
    </location>
</feature>
<feature type="binding site" evidence="1">
    <location>
        <position position="21"/>
    </location>
    <ligand>
        <name>substrate</name>
    </ligand>
</feature>
<feature type="binding site" evidence="1">
    <location>
        <begin position="108"/>
        <end position="109"/>
    </location>
    <ligand>
        <name>pyridoxal 5'-phosphate</name>
        <dbReference type="ChEBI" id="CHEBI:597326"/>
    </ligand>
</feature>
<feature type="binding site" evidence="1">
    <location>
        <position position="133"/>
    </location>
    <ligand>
        <name>substrate</name>
    </ligand>
</feature>
<feature type="binding site" evidence="1">
    <location>
        <position position="179"/>
    </location>
    <ligand>
        <name>pyridoxal 5'-phosphate</name>
        <dbReference type="ChEBI" id="CHEBI:597326"/>
    </ligand>
</feature>
<feature type="binding site" evidence="1">
    <location>
        <position position="207"/>
    </location>
    <ligand>
        <name>pyridoxal 5'-phosphate</name>
        <dbReference type="ChEBI" id="CHEBI:597326"/>
    </ligand>
</feature>
<feature type="binding site" evidence="1">
    <location>
        <position position="233"/>
    </location>
    <ligand>
        <name>pyridoxal 5'-phosphate</name>
        <dbReference type="ChEBI" id="CHEBI:597326"/>
    </ligand>
</feature>
<feature type="binding site" evidence="1">
    <location>
        <position position="352"/>
    </location>
    <ligand>
        <name>substrate</name>
    </ligand>
</feature>
<feature type="modified residue" description="N6-(pyridoxal phosphate)lysine" evidence="1">
    <location>
        <position position="236"/>
    </location>
</feature>
<accession>Q47829</accession>
<comment type="function">
    <text evidence="1">Catalyzes the decarboxylative condensation of pimeloyl-[acyl-carrier protein] and L-alanine to produce 8-amino-7-oxononanoate (AON), [acyl-carrier protein], and carbon dioxide.</text>
</comment>
<comment type="catalytic activity">
    <reaction evidence="1">
        <text>6-carboxyhexanoyl-[ACP] + L-alanine + H(+) = (8S)-8-amino-7-oxononanoate + holo-[ACP] + CO2</text>
        <dbReference type="Rhea" id="RHEA:42288"/>
        <dbReference type="Rhea" id="RHEA-COMP:9685"/>
        <dbReference type="Rhea" id="RHEA-COMP:9955"/>
        <dbReference type="ChEBI" id="CHEBI:15378"/>
        <dbReference type="ChEBI" id="CHEBI:16526"/>
        <dbReference type="ChEBI" id="CHEBI:57972"/>
        <dbReference type="ChEBI" id="CHEBI:64479"/>
        <dbReference type="ChEBI" id="CHEBI:78846"/>
        <dbReference type="ChEBI" id="CHEBI:149468"/>
        <dbReference type="EC" id="2.3.1.47"/>
    </reaction>
</comment>
<comment type="cofactor">
    <cofactor evidence="1">
        <name>pyridoxal 5'-phosphate</name>
        <dbReference type="ChEBI" id="CHEBI:597326"/>
    </cofactor>
</comment>
<comment type="pathway">
    <text evidence="1">Cofactor biosynthesis; biotin biosynthesis.</text>
</comment>
<comment type="subunit">
    <text evidence="1">Homodimer.</text>
</comment>
<comment type="similarity">
    <text evidence="1">Belongs to the class-II pyridoxal-phosphate-dependent aminotransferase family. BioF subfamily.</text>
</comment>
<name>BIOF_PSEVU</name>
<sequence length="385" mass="41277">MSWQQRIDTALATRRAADALRTRRVVEQGAGRWLTVGDSRYCNFSSNDYLGLSQHPAIVRAWQQGAEQYGVGSGGSGHVSGYTRAHYALESELAEWLGYPRALLFISGFAANQAVIAALTGKEDRIVADKLSHASLLEAASFSPAQLRRFAHNDVSQLAALLDKPCDGQQLAVTEGVFSMDGDSAPLAAIAEQVRRAGAWLLVDDAHGIAVTGHKGRGSCQQQEVKPELLVVTFGKGFGVSGAAVLCSEAVATYFEQFARHLIYSTSMPPAQAVALSAALSVIRGEEGDQRRTALAGLIQRFRHGAAALPGRITHSQSAIQPLIVGDNSRALSLAERLRQKGCWVTAIRPPTVPAGTARLRLTLTAAHQPEDIDRLLEVLHESGE</sequence>
<evidence type="ECO:0000255" key="1">
    <source>
        <dbReference type="HAMAP-Rule" id="MF_01693"/>
    </source>
</evidence>
<proteinExistence type="inferred from homology"/>
<organism>
    <name type="scientific">Pseudescherichia vulneris</name>
    <name type="common">Escherichia vulneris</name>
    <dbReference type="NCBI Taxonomy" id="566"/>
    <lineage>
        <taxon>Bacteria</taxon>
        <taxon>Pseudomonadati</taxon>
        <taxon>Pseudomonadota</taxon>
        <taxon>Gammaproteobacteria</taxon>
        <taxon>Enterobacterales</taxon>
        <taxon>Enterobacteriaceae</taxon>
        <taxon>Pseudescherichia</taxon>
    </lineage>
</organism>
<keyword id="KW-0093">Biotin biosynthesis</keyword>
<keyword id="KW-0663">Pyridoxal phosphate</keyword>
<keyword id="KW-0808">Transferase</keyword>
<protein>
    <recommendedName>
        <fullName evidence="1">8-amino-7-oxononanoate synthase</fullName>
        <shortName evidence="1">AONS</shortName>
        <ecNumber evidence="1">2.3.1.47</ecNumber>
    </recommendedName>
    <alternativeName>
        <fullName evidence="1">7-keto-8-amino-pelargonic acid synthase</fullName>
        <shortName evidence="1">7-KAP synthase</shortName>
        <shortName evidence="1">KAPA synthase</shortName>
    </alternativeName>
    <alternativeName>
        <fullName evidence="1">8-amino-7-ketopelargonate synthase</fullName>
    </alternativeName>
</protein>
<dbReference type="EC" id="2.3.1.47" evidence="1"/>
<dbReference type="EMBL" id="U50183">
    <property type="protein sequence ID" value="AAB03272.1"/>
    <property type="molecule type" value="Genomic_DNA"/>
</dbReference>
<dbReference type="SMR" id="Q47829"/>
<dbReference type="UniPathway" id="UPA00078"/>
<dbReference type="GO" id="GO:0008710">
    <property type="term" value="F:8-amino-7-oxononanoate synthase activity"/>
    <property type="evidence" value="ECO:0007669"/>
    <property type="project" value="UniProtKB-UniRule"/>
</dbReference>
<dbReference type="GO" id="GO:0030170">
    <property type="term" value="F:pyridoxal phosphate binding"/>
    <property type="evidence" value="ECO:0007669"/>
    <property type="project" value="UniProtKB-UniRule"/>
</dbReference>
<dbReference type="GO" id="GO:0009102">
    <property type="term" value="P:biotin biosynthetic process"/>
    <property type="evidence" value="ECO:0007669"/>
    <property type="project" value="UniProtKB-UniRule"/>
</dbReference>
<dbReference type="Gene3D" id="3.90.1150.10">
    <property type="entry name" value="Aspartate Aminotransferase, domain 1"/>
    <property type="match status" value="1"/>
</dbReference>
<dbReference type="Gene3D" id="3.40.640.10">
    <property type="entry name" value="Type I PLP-dependent aspartate aminotransferase-like (Major domain)"/>
    <property type="match status" value="1"/>
</dbReference>
<dbReference type="HAMAP" id="MF_01693">
    <property type="entry name" value="BioF_aminotrans_2"/>
    <property type="match status" value="1"/>
</dbReference>
<dbReference type="InterPro" id="IPR001917">
    <property type="entry name" value="Aminotrans_II_pyridoxalP_BS"/>
</dbReference>
<dbReference type="InterPro" id="IPR004839">
    <property type="entry name" value="Aminotransferase_I/II_large"/>
</dbReference>
<dbReference type="InterPro" id="IPR050087">
    <property type="entry name" value="AON_synthase_class-II"/>
</dbReference>
<dbReference type="InterPro" id="IPR004723">
    <property type="entry name" value="AONS_Archaea/Proteobacteria"/>
</dbReference>
<dbReference type="InterPro" id="IPR022834">
    <property type="entry name" value="AONS_Proteobacteria"/>
</dbReference>
<dbReference type="InterPro" id="IPR015424">
    <property type="entry name" value="PyrdxlP-dep_Trfase"/>
</dbReference>
<dbReference type="InterPro" id="IPR015421">
    <property type="entry name" value="PyrdxlP-dep_Trfase_major"/>
</dbReference>
<dbReference type="InterPro" id="IPR015422">
    <property type="entry name" value="PyrdxlP-dep_Trfase_small"/>
</dbReference>
<dbReference type="NCBIfam" id="TIGR00858">
    <property type="entry name" value="bioF"/>
    <property type="match status" value="1"/>
</dbReference>
<dbReference type="PANTHER" id="PTHR13693:SF100">
    <property type="entry name" value="8-AMINO-7-OXONONANOATE SYNTHASE"/>
    <property type="match status" value="1"/>
</dbReference>
<dbReference type="PANTHER" id="PTHR13693">
    <property type="entry name" value="CLASS II AMINOTRANSFERASE/8-AMINO-7-OXONONANOATE SYNTHASE"/>
    <property type="match status" value="1"/>
</dbReference>
<dbReference type="Pfam" id="PF00155">
    <property type="entry name" value="Aminotran_1_2"/>
    <property type="match status" value="1"/>
</dbReference>
<dbReference type="SUPFAM" id="SSF53383">
    <property type="entry name" value="PLP-dependent transferases"/>
    <property type="match status" value="1"/>
</dbReference>
<dbReference type="PROSITE" id="PS00599">
    <property type="entry name" value="AA_TRANSFER_CLASS_2"/>
    <property type="match status" value="1"/>
</dbReference>
<reference key="1">
    <citation type="journal article" date="1997" name="Biochem. Mol. Biol. Int.">
        <title>Molecular cloning and nucleotide sequencing of bioF (7-keto-8-amino pelargonic acid synthetase), bioC and bioD (dethiobiotin synthetase) genes of Erwinia herbicola.</title>
        <authorList>
            <person name="Wu C.H."/>
            <person name="Bao Y.Y."/>
            <person name="Shao C.P."/>
            <person name="Shiuan D."/>
        </authorList>
    </citation>
    <scope>NUCLEOTIDE SEQUENCE [GENOMIC DNA]</scope>
    <source>
        <strain>ATCC 39368 / Eho10</strain>
    </source>
</reference>